<feature type="chain" id="PRO_0000100586" description="Phosphoribosylformylglycinamidine synthase subunit PurQ">
    <location>
        <begin position="1"/>
        <end position="223"/>
    </location>
</feature>
<feature type="domain" description="Glutamine amidotransferase type-1" evidence="1">
    <location>
        <begin position="3"/>
        <end position="223"/>
    </location>
</feature>
<feature type="active site" description="Nucleophile" evidence="1">
    <location>
        <position position="85"/>
    </location>
</feature>
<feature type="active site" evidence="1">
    <location>
        <position position="193"/>
    </location>
</feature>
<feature type="active site" evidence="1">
    <location>
        <position position="195"/>
    </location>
</feature>
<proteinExistence type="inferred from homology"/>
<dbReference type="EC" id="6.3.5.3" evidence="1"/>
<dbReference type="EC" id="3.5.1.2" evidence="1"/>
<dbReference type="EMBL" id="BX571856">
    <property type="protein sequence ID" value="CAG40045.1"/>
    <property type="molecule type" value="Genomic_DNA"/>
</dbReference>
<dbReference type="RefSeq" id="WP_000666808.1">
    <property type="nucleotide sequence ID" value="NC_002952.2"/>
</dbReference>
<dbReference type="SMR" id="Q6GI16"/>
<dbReference type="KEGG" id="sar:SAR1042"/>
<dbReference type="HOGENOM" id="CLU_001031_3_1_9"/>
<dbReference type="UniPathway" id="UPA00074">
    <property type="reaction ID" value="UER00128"/>
</dbReference>
<dbReference type="Proteomes" id="UP000000596">
    <property type="component" value="Chromosome"/>
</dbReference>
<dbReference type="GO" id="GO:0005737">
    <property type="term" value="C:cytoplasm"/>
    <property type="evidence" value="ECO:0007669"/>
    <property type="project" value="UniProtKB-SubCell"/>
</dbReference>
<dbReference type="GO" id="GO:0005524">
    <property type="term" value="F:ATP binding"/>
    <property type="evidence" value="ECO:0007669"/>
    <property type="project" value="UniProtKB-KW"/>
</dbReference>
<dbReference type="GO" id="GO:0004359">
    <property type="term" value="F:glutaminase activity"/>
    <property type="evidence" value="ECO:0007669"/>
    <property type="project" value="UniProtKB-EC"/>
</dbReference>
<dbReference type="GO" id="GO:0004642">
    <property type="term" value="F:phosphoribosylformylglycinamidine synthase activity"/>
    <property type="evidence" value="ECO:0007669"/>
    <property type="project" value="UniProtKB-UniRule"/>
</dbReference>
<dbReference type="GO" id="GO:0006189">
    <property type="term" value="P:'de novo' IMP biosynthetic process"/>
    <property type="evidence" value="ECO:0007669"/>
    <property type="project" value="UniProtKB-UniRule"/>
</dbReference>
<dbReference type="CDD" id="cd01740">
    <property type="entry name" value="GATase1_FGAR_AT"/>
    <property type="match status" value="1"/>
</dbReference>
<dbReference type="Gene3D" id="3.40.50.880">
    <property type="match status" value="1"/>
</dbReference>
<dbReference type="HAMAP" id="MF_00421">
    <property type="entry name" value="PurQ"/>
    <property type="match status" value="1"/>
</dbReference>
<dbReference type="InterPro" id="IPR029062">
    <property type="entry name" value="Class_I_gatase-like"/>
</dbReference>
<dbReference type="InterPro" id="IPR010075">
    <property type="entry name" value="PRibForGlyAmidine_synth_PurQ"/>
</dbReference>
<dbReference type="NCBIfam" id="TIGR01737">
    <property type="entry name" value="FGAM_synth_I"/>
    <property type="match status" value="1"/>
</dbReference>
<dbReference type="NCBIfam" id="NF002957">
    <property type="entry name" value="PRK03619.1"/>
    <property type="match status" value="1"/>
</dbReference>
<dbReference type="PANTHER" id="PTHR47552">
    <property type="entry name" value="PHOSPHORIBOSYLFORMYLGLYCINAMIDINE SYNTHASE SUBUNIT PURQ"/>
    <property type="match status" value="1"/>
</dbReference>
<dbReference type="PANTHER" id="PTHR47552:SF1">
    <property type="entry name" value="PHOSPHORIBOSYLFORMYLGLYCINAMIDINE SYNTHASE SUBUNIT PURQ"/>
    <property type="match status" value="1"/>
</dbReference>
<dbReference type="Pfam" id="PF13507">
    <property type="entry name" value="GATase_5"/>
    <property type="match status" value="1"/>
</dbReference>
<dbReference type="PIRSF" id="PIRSF001586">
    <property type="entry name" value="FGAM_synth_I"/>
    <property type="match status" value="1"/>
</dbReference>
<dbReference type="SMART" id="SM01211">
    <property type="entry name" value="GATase_5"/>
    <property type="match status" value="1"/>
</dbReference>
<dbReference type="SUPFAM" id="SSF52317">
    <property type="entry name" value="Class I glutamine amidotransferase-like"/>
    <property type="match status" value="1"/>
</dbReference>
<dbReference type="PROSITE" id="PS51273">
    <property type="entry name" value="GATASE_TYPE_1"/>
    <property type="match status" value="1"/>
</dbReference>
<organism>
    <name type="scientific">Staphylococcus aureus (strain MRSA252)</name>
    <dbReference type="NCBI Taxonomy" id="282458"/>
    <lineage>
        <taxon>Bacteria</taxon>
        <taxon>Bacillati</taxon>
        <taxon>Bacillota</taxon>
        <taxon>Bacilli</taxon>
        <taxon>Bacillales</taxon>
        <taxon>Staphylococcaceae</taxon>
        <taxon>Staphylococcus</taxon>
    </lineage>
</organism>
<keyword id="KW-0067">ATP-binding</keyword>
<keyword id="KW-0963">Cytoplasm</keyword>
<keyword id="KW-0315">Glutamine amidotransferase</keyword>
<keyword id="KW-0378">Hydrolase</keyword>
<keyword id="KW-0436">Ligase</keyword>
<keyword id="KW-0547">Nucleotide-binding</keyword>
<keyword id="KW-0658">Purine biosynthesis</keyword>
<accession>Q6GI16</accession>
<gene>
    <name evidence="1" type="primary">purQ</name>
    <name type="ordered locus">SAR1042</name>
</gene>
<evidence type="ECO:0000255" key="1">
    <source>
        <dbReference type="HAMAP-Rule" id="MF_00421"/>
    </source>
</evidence>
<protein>
    <recommendedName>
        <fullName evidence="1">Phosphoribosylformylglycinamidine synthase subunit PurQ</fullName>
        <shortName evidence="1">FGAM synthase</shortName>
        <ecNumber evidence="1">6.3.5.3</ecNumber>
    </recommendedName>
    <alternativeName>
        <fullName evidence="1">Formylglycinamide ribonucleotide amidotransferase subunit I</fullName>
        <shortName evidence="1">FGAR amidotransferase I</shortName>
        <shortName evidence="1">FGAR-AT I</shortName>
    </alternativeName>
    <alternativeName>
        <fullName evidence="1">Glutaminase PurQ</fullName>
        <ecNumber evidence="1">3.5.1.2</ecNumber>
    </alternativeName>
    <alternativeName>
        <fullName evidence="1">Phosphoribosylformylglycinamidine synthase subunit I</fullName>
    </alternativeName>
</protein>
<comment type="function">
    <text evidence="1">Part of the phosphoribosylformylglycinamidine synthase complex involved in the purines biosynthetic pathway. Catalyzes the ATP-dependent conversion of formylglycinamide ribonucleotide (FGAR) and glutamine to yield formylglycinamidine ribonucleotide (FGAM) and glutamate. The FGAM synthase complex is composed of three subunits. PurQ produces an ammonia molecule by converting glutamine to glutamate. PurL transfers the ammonia molecule to FGAR to form FGAM in an ATP-dependent manner. PurS interacts with PurQ and PurL and is thought to assist in the transfer of the ammonia molecule from PurQ to PurL.</text>
</comment>
<comment type="catalytic activity">
    <reaction evidence="1">
        <text>N(2)-formyl-N(1)-(5-phospho-beta-D-ribosyl)glycinamide + L-glutamine + ATP + H2O = 2-formamido-N(1)-(5-O-phospho-beta-D-ribosyl)acetamidine + L-glutamate + ADP + phosphate + H(+)</text>
        <dbReference type="Rhea" id="RHEA:17129"/>
        <dbReference type="ChEBI" id="CHEBI:15377"/>
        <dbReference type="ChEBI" id="CHEBI:15378"/>
        <dbReference type="ChEBI" id="CHEBI:29985"/>
        <dbReference type="ChEBI" id="CHEBI:30616"/>
        <dbReference type="ChEBI" id="CHEBI:43474"/>
        <dbReference type="ChEBI" id="CHEBI:58359"/>
        <dbReference type="ChEBI" id="CHEBI:147286"/>
        <dbReference type="ChEBI" id="CHEBI:147287"/>
        <dbReference type="ChEBI" id="CHEBI:456216"/>
        <dbReference type="EC" id="6.3.5.3"/>
    </reaction>
</comment>
<comment type="catalytic activity">
    <reaction evidence="1">
        <text>L-glutamine + H2O = L-glutamate + NH4(+)</text>
        <dbReference type="Rhea" id="RHEA:15889"/>
        <dbReference type="ChEBI" id="CHEBI:15377"/>
        <dbReference type="ChEBI" id="CHEBI:28938"/>
        <dbReference type="ChEBI" id="CHEBI:29985"/>
        <dbReference type="ChEBI" id="CHEBI:58359"/>
        <dbReference type="EC" id="3.5.1.2"/>
    </reaction>
</comment>
<comment type="pathway">
    <text evidence="1">Purine metabolism; IMP biosynthesis via de novo pathway; 5-amino-1-(5-phospho-D-ribosyl)imidazole from N(2)-formyl-N(1)-(5-phospho-D-ribosyl)glycinamide: step 1/2.</text>
</comment>
<comment type="subunit">
    <text evidence="1">Part of the FGAM synthase complex composed of 1 PurL, 1 PurQ and 2 PurS subunits.</text>
</comment>
<comment type="subcellular location">
    <subcellularLocation>
        <location evidence="1">Cytoplasm</location>
    </subcellularLocation>
</comment>
<name>PURQ_STAAR</name>
<sequence length="223" mass="24513">MKFAVLVFPGSNCDRDMFNAAIKSGVEAEYVDYRETSLSGFDGVLIPGGFSFGDYLRSGAMASVAPVISEVKRLAAEGKPVLGVCNGFQILTEIGLLPGALLHNDSHLFISRNEELEIVNNQTAFTNLYEQGEKVIYPVAHGEGHYYCTDEIYQKLKANNQIILKYVNNPNGSYDDIAGIVNEKGNVCGMMPHPERALETLLGTDSGVKLFEAMVKSWREQHV</sequence>
<reference key="1">
    <citation type="journal article" date="2004" name="Proc. Natl. Acad. Sci. U.S.A.">
        <title>Complete genomes of two clinical Staphylococcus aureus strains: evidence for the rapid evolution of virulence and drug resistance.</title>
        <authorList>
            <person name="Holden M.T.G."/>
            <person name="Feil E.J."/>
            <person name="Lindsay J.A."/>
            <person name="Peacock S.J."/>
            <person name="Day N.P.J."/>
            <person name="Enright M.C."/>
            <person name="Foster T.J."/>
            <person name="Moore C.E."/>
            <person name="Hurst L."/>
            <person name="Atkin R."/>
            <person name="Barron A."/>
            <person name="Bason N."/>
            <person name="Bentley S.D."/>
            <person name="Chillingworth C."/>
            <person name="Chillingworth T."/>
            <person name="Churcher C."/>
            <person name="Clark L."/>
            <person name="Corton C."/>
            <person name="Cronin A."/>
            <person name="Doggett J."/>
            <person name="Dowd L."/>
            <person name="Feltwell T."/>
            <person name="Hance Z."/>
            <person name="Harris B."/>
            <person name="Hauser H."/>
            <person name="Holroyd S."/>
            <person name="Jagels K."/>
            <person name="James K.D."/>
            <person name="Lennard N."/>
            <person name="Line A."/>
            <person name="Mayes R."/>
            <person name="Moule S."/>
            <person name="Mungall K."/>
            <person name="Ormond D."/>
            <person name="Quail M.A."/>
            <person name="Rabbinowitsch E."/>
            <person name="Rutherford K.M."/>
            <person name="Sanders M."/>
            <person name="Sharp S."/>
            <person name="Simmonds M."/>
            <person name="Stevens K."/>
            <person name="Whitehead S."/>
            <person name="Barrell B.G."/>
            <person name="Spratt B.G."/>
            <person name="Parkhill J."/>
        </authorList>
    </citation>
    <scope>NUCLEOTIDE SEQUENCE [LARGE SCALE GENOMIC DNA]</scope>
    <source>
        <strain>MRSA252</strain>
    </source>
</reference>